<gene>
    <name type="ordered locus">BBta_6487</name>
</gene>
<proteinExistence type="inferred from homology"/>
<organism>
    <name type="scientific">Bradyrhizobium sp. (strain BTAi1 / ATCC BAA-1182)</name>
    <dbReference type="NCBI Taxonomy" id="288000"/>
    <lineage>
        <taxon>Bacteria</taxon>
        <taxon>Pseudomonadati</taxon>
        <taxon>Pseudomonadota</taxon>
        <taxon>Alphaproteobacteria</taxon>
        <taxon>Hyphomicrobiales</taxon>
        <taxon>Nitrobacteraceae</taxon>
        <taxon>Bradyrhizobium</taxon>
    </lineage>
</organism>
<keyword id="KW-0456">Lyase</keyword>
<keyword id="KW-1185">Reference proteome</keyword>
<accession>A5EQF2</accession>
<name>KDGD_BRASB</name>
<feature type="chain" id="PRO_1000045400" description="Probable 5-dehydro-4-deoxyglucarate dehydratase">
    <location>
        <begin position="1"/>
        <end position="313"/>
    </location>
</feature>
<evidence type="ECO:0000255" key="1">
    <source>
        <dbReference type="HAMAP-Rule" id="MF_00694"/>
    </source>
</evidence>
<protein>
    <recommendedName>
        <fullName evidence="1">Probable 5-dehydro-4-deoxyglucarate dehydratase</fullName>
        <ecNumber evidence="1">4.2.1.41</ecNumber>
    </recommendedName>
    <alternativeName>
        <fullName evidence="1">5-keto-4-deoxy-glucarate dehydratase</fullName>
        <shortName evidence="1">KDGDH</shortName>
    </alternativeName>
</protein>
<sequence length="313" mass="33561">MSKMTPQEMAAKIGSGLLSFPVTPFKADYSFDEATYRANMDWLCGYEVAGLFAAGGTGEFFSLTPAEVPEVVRVAVDETRGRVPVLAGTGYGTAIAREIAIGAEKAGADGLLLLPPYLTHAEQDGLAAHVEAVCKSVKIGVIVYNRDNAILQPDTLARLCERCPNLVGYKDGIGDIELMTRVYSKMGDRLTYIGGLPTAETFALPYLDMGVTTYSSAVFNFVPEFATNFYAAVRKRDHATIHAGLKDFILPLIAIRNRKKGYAVSIIKAGMKVIGRDSGPVRLPLTDLTETEMAELTALVKALPAAAVSQAAE</sequence>
<dbReference type="EC" id="4.2.1.41" evidence="1"/>
<dbReference type="EMBL" id="CP000494">
    <property type="protein sequence ID" value="ABQ38396.1"/>
    <property type="molecule type" value="Genomic_DNA"/>
</dbReference>
<dbReference type="RefSeq" id="WP_012046337.1">
    <property type="nucleotide sequence ID" value="NC_009485.1"/>
</dbReference>
<dbReference type="SMR" id="A5EQF2"/>
<dbReference type="STRING" id="288000.BBta_6487"/>
<dbReference type="KEGG" id="bbt:BBta_6487"/>
<dbReference type="eggNOG" id="COG0329">
    <property type="taxonomic scope" value="Bacteria"/>
</dbReference>
<dbReference type="HOGENOM" id="CLU_049343_5_2_5"/>
<dbReference type="OrthoDB" id="8995637at2"/>
<dbReference type="UniPathway" id="UPA00564">
    <property type="reaction ID" value="UER00628"/>
</dbReference>
<dbReference type="Proteomes" id="UP000000246">
    <property type="component" value="Chromosome"/>
</dbReference>
<dbReference type="GO" id="GO:0008840">
    <property type="term" value="F:4-hydroxy-tetrahydrodipicolinate synthase activity"/>
    <property type="evidence" value="ECO:0007669"/>
    <property type="project" value="TreeGrafter"/>
</dbReference>
<dbReference type="GO" id="GO:0047448">
    <property type="term" value="F:5-dehydro-4-deoxyglucarate dehydratase activity"/>
    <property type="evidence" value="ECO:0007669"/>
    <property type="project" value="UniProtKB-UniRule"/>
</dbReference>
<dbReference type="GO" id="GO:0042838">
    <property type="term" value="P:D-glucarate catabolic process"/>
    <property type="evidence" value="ECO:0007669"/>
    <property type="project" value="UniProtKB-UniRule"/>
</dbReference>
<dbReference type="CDD" id="cd00951">
    <property type="entry name" value="KDGDH"/>
    <property type="match status" value="1"/>
</dbReference>
<dbReference type="Gene3D" id="3.20.20.70">
    <property type="entry name" value="Aldolase class I"/>
    <property type="match status" value="1"/>
</dbReference>
<dbReference type="HAMAP" id="MF_00694">
    <property type="entry name" value="KDGDH"/>
    <property type="match status" value="1"/>
</dbReference>
<dbReference type="InterPro" id="IPR013785">
    <property type="entry name" value="Aldolase_TIM"/>
</dbReference>
<dbReference type="InterPro" id="IPR002220">
    <property type="entry name" value="DapA-like"/>
</dbReference>
<dbReference type="InterPro" id="IPR017655">
    <property type="entry name" value="Dehydro-deoxyglucarate_dehyd"/>
</dbReference>
<dbReference type="NCBIfam" id="TIGR03249">
    <property type="entry name" value="KdgD"/>
    <property type="match status" value="1"/>
</dbReference>
<dbReference type="NCBIfam" id="NF002958">
    <property type="entry name" value="PRK03620.1"/>
    <property type="match status" value="1"/>
</dbReference>
<dbReference type="PANTHER" id="PTHR12128:SF19">
    <property type="entry name" value="5-DEHYDRO-4-DEOXYGLUCARATE DEHYDRATASE 2-RELATED"/>
    <property type="match status" value="1"/>
</dbReference>
<dbReference type="PANTHER" id="PTHR12128">
    <property type="entry name" value="DIHYDRODIPICOLINATE SYNTHASE"/>
    <property type="match status" value="1"/>
</dbReference>
<dbReference type="Pfam" id="PF00701">
    <property type="entry name" value="DHDPS"/>
    <property type="match status" value="1"/>
</dbReference>
<dbReference type="PIRSF" id="PIRSF001365">
    <property type="entry name" value="DHDPS"/>
    <property type="match status" value="1"/>
</dbReference>
<dbReference type="SMART" id="SM01130">
    <property type="entry name" value="DHDPS"/>
    <property type="match status" value="1"/>
</dbReference>
<dbReference type="SUPFAM" id="SSF51569">
    <property type="entry name" value="Aldolase"/>
    <property type="match status" value="1"/>
</dbReference>
<reference key="1">
    <citation type="journal article" date="2007" name="Science">
        <title>Legumes symbioses: absence of nod genes in photosynthetic bradyrhizobia.</title>
        <authorList>
            <person name="Giraud E."/>
            <person name="Moulin L."/>
            <person name="Vallenet D."/>
            <person name="Barbe V."/>
            <person name="Cytryn E."/>
            <person name="Avarre J.-C."/>
            <person name="Jaubert M."/>
            <person name="Simon D."/>
            <person name="Cartieaux F."/>
            <person name="Prin Y."/>
            <person name="Bena G."/>
            <person name="Hannibal L."/>
            <person name="Fardoux J."/>
            <person name="Kojadinovic M."/>
            <person name="Vuillet L."/>
            <person name="Lajus A."/>
            <person name="Cruveiller S."/>
            <person name="Rouy Z."/>
            <person name="Mangenot S."/>
            <person name="Segurens B."/>
            <person name="Dossat C."/>
            <person name="Franck W.L."/>
            <person name="Chang W.-S."/>
            <person name="Saunders E."/>
            <person name="Bruce D."/>
            <person name="Richardson P."/>
            <person name="Normand P."/>
            <person name="Dreyfus B."/>
            <person name="Pignol D."/>
            <person name="Stacey G."/>
            <person name="Emerich D."/>
            <person name="Vermeglio A."/>
            <person name="Medigue C."/>
            <person name="Sadowsky M."/>
        </authorList>
    </citation>
    <scope>NUCLEOTIDE SEQUENCE [LARGE SCALE GENOMIC DNA]</scope>
    <source>
        <strain>BTAi1 / ATCC BAA-1182</strain>
    </source>
</reference>
<comment type="catalytic activity">
    <reaction evidence="1">
        <text>5-dehydro-4-deoxy-D-glucarate + H(+) = 2,5-dioxopentanoate + CO2 + H2O</text>
        <dbReference type="Rhea" id="RHEA:24608"/>
        <dbReference type="ChEBI" id="CHEBI:15377"/>
        <dbReference type="ChEBI" id="CHEBI:15378"/>
        <dbReference type="ChEBI" id="CHEBI:16526"/>
        <dbReference type="ChEBI" id="CHEBI:42819"/>
        <dbReference type="ChEBI" id="CHEBI:58136"/>
        <dbReference type="EC" id="4.2.1.41"/>
    </reaction>
</comment>
<comment type="pathway">
    <text evidence="1">Carbohydrate acid metabolism; D-glucarate degradation; 2,5-dioxopentanoate from D-glucarate: step 2/2.</text>
</comment>
<comment type="similarity">
    <text evidence="1">Belongs to the DapA family.</text>
</comment>